<feature type="chain" id="PRO_0000092348" description="Fe(3+) ions import ATP-binding protein FbpC">
    <location>
        <begin position="1"/>
        <end position="348"/>
    </location>
</feature>
<feature type="domain" description="ABC transporter" evidence="1">
    <location>
        <begin position="7"/>
        <end position="237"/>
    </location>
</feature>
<feature type="binding site" evidence="1">
    <location>
        <begin position="39"/>
        <end position="46"/>
    </location>
    <ligand>
        <name>ATP</name>
        <dbReference type="ChEBI" id="CHEBI:30616"/>
    </ligand>
</feature>
<organism>
    <name type="scientific">Escherichia coli O157:H7</name>
    <dbReference type="NCBI Taxonomy" id="83334"/>
    <lineage>
        <taxon>Bacteria</taxon>
        <taxon>Pseudomonadati</taxon>
        <taxon>Pseudomonadota</taxon>
        <taxon>Gammaproteobacteria</taxon>
        <taxon>Enterobacterales</taxon>
        <taxon>Enterobacteriaceae</taxon>
        <taxon>Escherichia</taxon>
    </lineage>
</organism>
<name>FBPC_ECO57</name>
<comment type="function">
    <text evidence="1">Part of the ABC transporter complex FbpABC involved in Fe(3+) ions import. Responsible for energy coupling to the transport system.</text>
</comment>
<comment type="catalytic activity">
    <reaction evidence="1">
        <text>Fe(3+)(out) + ATP + H2O = Fe(3+)(in) + ADP + phosphate + H(+)</text>
        <dbReference type="Rhea" id="RHEA:12332"/>
        <dbReference type="ChEBI" id="CHEBI:15377"/>
        <dbReference type="ChEBI" id="CHEBI:15378"/>
        <dbReference type="ChEBI" id="CHEBI:29034"/>
        <dbReference type="ChEBI" id="CHEBI:30616"/>
        <dbReference type="ChEBI" id="CHEBI:43474"/>
        <dbReference type="ChEBI" id="CHEBI:456216"/>
        <dbReference type="EC" id="7.2.2.7"/>
    </reaction>
</comment>
<comment type="subunit">
    <text evidence="1">The complex is composed of two ATP-binding proteins (FbpC), two transmembrane proteins (FbpB) and a solute-binding protein (FbpA).</text>
</comment>
<comment type="subcellular location">
    <subcellularLocation>
        <location evidence="1">Cell inner membrane</location>
        <topology evidence="1">Peripheral membrane protein</topology>
    </subcellularLocation>
</comment>
<comment type="similarity">
    <text evidence="1">Belongs to the ABC transporter superfamily. Fe(3+) ion importer (TC 3.A.1.10) family.</text>
</comment>
<comment type="sequence caution" evidence="2">
    <conflict type="erroneous initiation">
        <sequence resource="EMBL-CDS" id="AAG54709"/>
    </conflict>
    <text>Extended N-terminus.</text>
</comment>
<proteinExistence type="inferred from homology"/>
<keyword id="KW-0067">ATP-binding</keyword>
<keyword id="KW-0997">Cell inner membrane</keyword>
<keyword id="KW-1003">Cell membrane</keyword>
<keyword id="KW-0406">Ion transport</keyword>
<keyword id="KW-0408">Iron</keyword>
<keyword id="KW-0410">Iron transport</keyword>
<keyword id="KW-0472">Membrane</keyword>
<keyword id="KW-0547">Nucleotide-binding</keyword>
<keyword id="KW-1185">Reference proteome</keyword>
<keyword id="KW-1278">Translocase</keyword>
<keyword id="KW-0813">Transport</keyword>
<evidence type="ECO:0000255" key="1">
    <source>
        <dbReference type="HAMAP-Rule" id="MF_01706"/>
    </source>
</evidence>
<evidence type="ECO:0000305" key="2"/>
<accession>Q7AH43</accession>
<accession>Q8X4K6</accession>
<gene>
    <name evidence="1" type="primary">fbpC</name>
    <name type="synonym">afuC</name>
    <name type="ordered locus">Z0458</name>
    <name type="ordered locus">ECs0413</name>
</gene>
<dbReference type="EC" id="7.2.2.7" evidence="1"/>
<dbReference type="EMBL" id="AE005174">
    <property type="protein sequence ID" value="AAG54709.1"/>
    <property type="status" value="ALT_INIT"/>
    <property type="molecule type" value="Genomic_DNA"/>
</dbReference>
<dbReference type="EMBL" id="BA000007">
    <property type="protein sequence ID" value="BAB33836.2"/>
    <property type="molecule type" value="Genomic_DNA"/>
</dbReference>
<dbReference type="PIR" id="A85531">
    <property type="entry name" value="A85531"/>
</dbReference>
<dbReference type="PIR" id="E90680">
    <property type="entry name" value="E90680"/>
</dbReference>
<dbReference type="RefSeq" id="NP_308440.2">
    <property type="nucleotide sequence ID" value="NC_002695.1"/>
</dbReference>
<dbReference type="RefSeq" id="WP_000078833.1">
    <property type="nucleotide sequence ID" value="NZ_VOAI01000005.1"/>
</dbReference>
<dbReference type="SMR" id="Q7AH43"/>
<dbReference type="STRING" id="155864.Z0458"/>
<dbReference type="GeneID" id="914515"/>
<dbReference type="KEGG" id="ece:Z0458"/>
<dbReference type="KEGG" id="ecs:ECs_0413"/>
<dbReference type="PATRIC" id="fig|386585.9.peg.508"/>
<dbReference type="eggNOG" id="COG3842">
    <property type="taxonomic scope" value="Bacteria"/>
</dbReference>
<dbReference type="HOGENOM" id="CLU_000604_1_1_6"/>
<dbReference type="OMA" id="WEIVANW"/>
<dbReference type="Proteomes" id="UP000000558">
    <property type="component" value="Chromosome"/>
</dbReference>
<dbReference type="Proteomes" id="UP000002519">
    <property type="component" value="Chromosome"/>
</dbReference>
<dbReference type="GO" id="GO:0043190">
    <property type="term" value="C:ATP-binding cassette (ABC) transporter complex"/>
    <property type="evidence" value="ECO:0007669"/>
    <property type="project" value="InterPro"/>
</dbReference>
<dbReference type="GO" id="GO:0015408">
    <property type="term" value="F:ABC-type ferric iron transporter activity"/>
    <property type="evidence" value="ECO:0007669"/>
    <property type="project" value="UniProtKB-EC"/>
</dbReference>
<dbReference type="GO" id="GO:0005524">
    <property type="term" value="F:ATP binding"/>
    <property type="evidence" value="ECO:0007669"/>
    <property type="project" value="UniProtKB-KW"/>
</dbReference>
<dbReference type="GO" id="GO:0016887">
    <property type="term" value="F:ATP hydrolysis activity"/>
    <property type="evidence" value="ECO:0007669"/>
    <property type="project" value="InterPro"/>
</dbReference>
<dbReference type="FunFam" id="3.40.50.300:FF:002767">
    <property type="entry name" value="Fe(3+) ions import ATP-binding protein FbpC"/>
    <property type="match status" value="1"/>
</dbReference>
<dbReference type="Gene3D" id="2.40.50.100">
    <property type="match status" value="1"/>
</dbReference>
<dbReference type="Gene3D" id="3.40.50.300">
    <property type="entry name" value="P-loop containing nucleotide triphosphate hydrolases"/>
    <property type="match status" value="1"/>
</dbReference>
<dbReference type="InterPro" id="IPR003593">
    <property type="entry name" value="AAA+_ATPase"/>
</dbReference>
<dbReference type="InterPro" id="IPR050093">
    <property type="entry name" value="ABC_SmlMolc_Importer"/>
</dbReference>
<dbReference type="InterPro" id="IPR003439">
    <property type="entry name" value="ABC_transporter-like_ATP-bd"/>
</dbReference>
<dbReference type="InterPro" id="IPR017871">
    <property type="entry name" value="ABC_transporter-like_CS"/>
</dbReference>
<dbReference type="InterPro" id="IPR008995">
    <property type="entry name" value="Mo/tungstate-bd_C_term_dom"/>
</dbReference>
<dbReference type="InterPro" id="IPR027417">
    <property type="entry name" value="P-loop_NTPase"/>
</dbReference>
<dbReference type="InterPro" id="IPR013611">
    <property type="entry name" value="Transp-assoc_OB_typ2"/>
</dbReference>
<dbReference type="NCBIfam" id="NF008513">
    <property type="entry name" value="PRK11432.1"/>
    <property type="match status" value="1"/>
</dbReference>
<dbReference type="PANTHER" id="PTHR42781">
    <property type="entry name" value="SPERMIDINE/PUTRESCINE IMPORT ATP-BINDING PROTEIN POTA"/>
    <property type="match status" value="1"/>
</dbReference>
<dbReference type="PANTHER" id="PTHR42781:SF4">
    <property type="entry name" value="SPERMIDINE_PUTRESCINE IMPORT ATP-BINDING PROTEIN POTA"/>
    <property type="match status" value="1"/>
</dbReference>
<dbReference type="Pfam" id="PF00005">
    <property type="entry name" value="ABC_tran"/>
    <property type="match status" value="1"/>
</dbReference>
<dbReference type="Pfam" id="PF08402">
    <property type="entry name" value="TOBE_2"/>
    <property type="match status" value="1"/>
</dbReference>
<dbReference type="SMART" id="SM00382">
    <property type="entry name" value="AAA"/>
    <property type="match status" value="1"/>
</dbReference>
<dbReference type="SUPFAM" id="SSF50331">
    <property type="entry name" value="MOP-like"/>
    <property type="match status" value="1"/>
</dbReference>
<dbReference type="SUPFAM" id="SSF52540">
    <property type="entry name" value="P-loop containing nucleoside triphosphate hydrolases"/>
    <property type="match status" value="1"/>
</dbReference>
<dbReference type="PROSITE" id="PS00211">
    <property type="entry name" value="ABC_TRANSPORTER_1"/>
    <property type="match status" value="1"/>
</dbReference>
<dbReference type="PROSITE" id="PS50893">
    <property type="entry name" value="ABC_TRANSPORTER_2"/>
    <property type="match status" value="1"/>
</dbReference>
<dbReference type="PROSITE" id="PS51242">
    <property type="entry name" value="FBPC"/>
    <property type="match status" value="1"/>
</dbReference>
<protein>
    <recommendedName>
        <fullName evidence="1">Fe(3+) ions import ATP-binding protein FbpC</fullName>
        <ecNumber evidence="1">7.2.2.7</ecNumber>
    </recommendedName>
</protein>
<sequence length="348" mass="39128">MSQKNFVELRNVTKRFGSNTVIDNINLTIPQGQMVTLLGPSGCGKTTILRLVAGLEKPSEGQIFIDGEDVTHRSIQQRDICMVFQSYALFPHMSLGENVGYGLKMLGVSRSEVKQRVKEALAMVDLEGFEDRYVDQISGGQQQRVALARALILKPKVLLFDEPLSNLDANLRRSMRDKIRELQKQFNITSLYVTHDQSEAFAVSDTVLVMNKGHIMQIGSPQDLYRQPASRFMASFMGDANLFPANFSEEYVDIYGYRLPRAAHFPVQGSGTVGVRPEAITLSNHGEESQRCVIRHVAYMGPQYEVTVEWHGQEILLQVNATRLQPDIGEHYYLEIHPYGMFVLADAA</sequence>
<reference key="1">
    <citation type="journal article" date="2001" name="Nature">
        <title>Genome sequence of enterohaemorrhagic Escherichia coli O157:H7.</title>
        <authorList>
            <person name="Perna N.T."/>
            <person name="Plunkett G. III"/>
            <person name="Burland V."/>
            <person name="Mau B."/>
            <person name="Glasner J.D."/>
            <person name="Rose D.J."/>
            <person name="Mayhew G.F."/>
            <person name="Evans P.S."/>
            <person name="Gregor J."/>
            <person name="Kirkpatrick H.A."/>
            <person name="Posfai G."/>
            <person name="Hackett J."/>
            <person name="Klink S."/>
            <person name="Boutin A."/>
            <person name="Shao Y."/>
            <person name="Miller L."/>
            <person name="Grotbeck E.J."/>
            <person name="Davis N.W."/>
            <person name="Lim A."/>
            <person name="Dimalanta E.T."/>
            <person name="Potamousis K."/>
            <person name="Apodaca J."/>
            <person name="Anantharaman T.S."/>
            <person name="Lin J."/>
            <person name="Yen G."/>
            <person name="Schwartz D.C."/>
            <person name="Welch R.A."/>
            <person name="Blattner F.R."/>
        </authorList>
    </citation>
    <scope>NUCLEOTIDE SEQUENCE [LARGE SCALE GENOMIC DNA]</scope>
    <source>
        <strain>O157:H7 / EDL933 / ATCC 700927 / EHEC</strain>
    </source>
</reference>
<reference key="2">
    <citation type="journal article" date="2001" name="DNA Res.">
        <title>Complete genome sequence of enterohemorrhagic Escherichia coli O157:H7 and genomic comparison with a laboratory strain K-12.</title>
        <authorList>
            <person name="Hayashi T."/>
            <person name="Makino K."/>
            <person name="Ohnishi M."/>
            <person name="Kurokawa K."/>
            <person name="Ishii K."/>
            <person name="Yokoyama K."/>
            <person name="Han C.-G."/>
            <person name="Ohtsubo E."/>
            <person name="Nakayama K."/>
            <person name="Murata T."/>
            <person name="Tanaka M."/>
            <person name="Tobe T."/>
            <person name="Iida T."/>
            <person name="Takami H."/>
            <person name="Honda T."/>
            <person name="Sasakawa C."/>
            <person name="Ogasawara N."/>
            <person name="Yasunaga T."/>
            <person name="Kuhara S."/>
            <person name="Shiba T."/>
            <person name="Hattori M."/>
            <person name="Shinagawa H."/>
        </authorList>
    </citation>
    <scope>NUCLEOTIDE SEQUENCE [LARGE SCALE GENOMIC DNA]</scope>
    <source>
        <strain>O157:H7 / Sakai / RIMD 0509952 / EHEC</strain>
    </source>
</reference>